<feature type="chain" id="PRO_0000441501" description="Genome polyprotein">
    <location>
        <begin position="1"/>
        <end position="3416"/>
    </location>
</feature>
<feature type="chain" id="PRO_0000441502" description="Capsid protein C" evidence="1">
    <location>
        <begin position="1"/>
        <end position="96"/>
    </location>
</feature>
<feature type="propeptide" id="PRO_0000441503" description="ER anchor for the capsid protein C, removed in mature form by serine protease NS3" evidence="1">
    <location>
        <begin position="97"/>
        <end position="117"/>
    </location>
</feature>
<feature type="chain" id="PRO_0000441504" description="Protein prM" evidence="2">
    <location>
        <begin position="118"/>
        <end position="281"/>
    </location>
</feature>
<feature type="chain" id="PRO_0000441505" description="Peptide pr" evidence="2">
    <location>
        <begin position="118"/>
        <end position="206"/>
    </location>
</feature>
<feature type="chain" id="PRO_0000441506" description="Small envelope protein M" evidence="2">
    <location>
        <begin position="207"/>
        <end position="281"/>
    </location>
</feature>
<feature type="chain" id="PRO_0000441507" description="Envelope protein E" evidence="2">
    <location>
        <begin position="282"/>
        <end position="777"/>
    </location>
</feature>
<feature type="chain" id="PRO_0000441508" description="Non-structural protein 1" evidence="1">
    <location>
        <begin position="778"/>
        <end position="1130"/>
    </location>
</feature>
<feature type="chain" id="PRO_0000441509" description="Non-structural protein 2A" evidence="2">
    <location>
        <begin position="1131"/>
        <end position="1360"/>
    </location>
</feature>
<feature type="chain" id="PRO_0000441510" description="Serine protease subunit NS2B" evidence="1">
    <location>
        <begin position="1361"/>
        <end position="1491"/>
    </location>
</feature>
<feature type="chain" id="PRO_0000441511" description="Serine protease NS3" evidence="1">
    <location>
        <begin position="1492"/>
        <end position="2112"/>
    </location>
</feature>
<feature type="chain" id="PRO_0000441512" description="Non-structural protein 4A" evidence="1">
    <location>
        <begin position="2113"/>
        <end position="2238"/>
    </location>
</feature>
<feature type="peptide" id="PRO_0000441513" description="Peptide 2k" evidence="1">
    <location>
        <begin position="2239"/>
        <end position="2261"/>
    </location>
</feature>
<feature type="chain" id="PRO_0000441514" description="Non-structural protein 4B" evidence="1">
    <location>
        <begin position="2262"/>
        <end position="2513"/>
    </location>
</feature>
<feature type="chain" id="PRO_0000441515" description="RNA-directed RNA polymerase NS5" evidence="1">
    <location>
        <begin position="2514"/>
        <end position="3416"/>
    </location>
</feature>
<feature type="topological domain" description="Cytoplasmic" evidence="10">
    <location>
        <begin position="1"/>
        <end position="99"/>
    </location>
</feature>
<feature type="transmembrane region" description="Helical" evidence="10">
    <location>
        <begin position="100"/>
        <end position="120"/>
    </location>
</feature>
<feature type="topological domain" description="Extracellular" evidence="10">
    <location>
        <begin position="121"/>
        <end position="243"/>
    </location>
</feature>
<feature type="transmembrane region" description="Helical" evidence="19">
    <location>
        <begin position="244"/>
        <end position="261"/>
    </location>
</feature>
<feature type="topological domain" description="Cytoplasmic" evidence="10">
    <location>
        <position position="262"/>
    </location>
</feature>
<feature type="transmembrane region" description="Helical" evidence="19">
    <location>
        <begin position="263"/>
        <end position="281"/>
    </location>
</feature>
<feature type="topological domain" description="Extracellular" evidence="10">
    <location>
        <begin position="282"/>
        <end position="728"/>
    </location>
</feature>
<feature type="transmembrane region" description="Helical" evidence="10">
    <location>
        <begin position="729"/>
        <end position="749"/>
    </location>
</feature>
<feature type="topological domain" description="Cytoplasmic" evidence="10">
    <location>
        <begin position="750"/>
        <end position="756"/>
    </location>
</feature>
<feature type="transmembrane region" description="Helical" evidence="10">
    <location>
        <begin position="757"/>
        <end position="777"/>
    </location>
</feature>
<feature type="topological domain" description="Extracellular" evidence="10">
    <location>
        <begin position="778"/>
        <end position="1134"/>
    </location>
</feature>
<feature type="transmembrane region" description="Helical" evidence="10">
    <location>
        <begin position="1135"/>
        <end position="1155"/>
    </location>
</feature>
<feature type="topological domain" description="Lumenal" evidence="10">
    <location>
        <begin position="1156"/>
        <end position="1164"/>
    </location>
</feature>
<feature type="transmembrane region" description="Helical" evidence="10">
    <location>
        <begin position="1165"/>
        <end position="1185"/>
    </location>
</feature>
<feature type="topological domain" description="Cytoplasmic" evidence="10">
    <location>
        <begin position="1186"/>
        <end position="1189"/>
    </location>
</feature>
<feature type="transmembrane region" description="Helical" evidence="10">
    <location>
        <begin position="1190"/>
        <end position="1210"/>
    </location>
</feature>
<feature type="topological domain" description="Lumenal" evidence="10">
    <location>
        <begin position="1211"/>
        <end position="1235"/>
    </location>
</feature>
<feature type="transmembrane region" description="Helical" evidence="10">
    <location>
        <begin position="1236"/>
        <end position="1256"/>
    </location>
</feature>
<feature type="topological domain" description="Cytoplasmic" evidence="10">
    <location>
        <begin position="1257"/>
        <end position="1295"/>
    </location>
</feature>
<feature type="transmembrane region" description="Helical" evidence="10">
    <location>
        <begin position="1296"/>
        <end position="1316"/>
    </location>
</feature>
<feature type="topological domain" description="Lumenal" evidence="10">
    <location>
        <begin position="1317"/>
        <end position="1361"/>
    </location>
</feature>
<feature type="transmembrane region" description="Helical" evidence="10">
    <location>
        <begin position="1362"/>
        <end position="1379"/>
    </location>
</feature>
<feature type="topological domain" description="Cytoplasmic" evidence="10">
    <location>
        <begin position="1380"/>
        <end position="1384"/>
    </location>
</feature>
<feature type="transmembrane region" description="Helical" evidence="10">
    <location>
        <begin position="1385"/>
        <end position="1405"/>
    </location>
</feature>
<feature type="topological domain" description="Lumenal" evidence="10">
    <location>
        <begin position="1406"/>
        <end position="1456"/>
    </location>
</feature>
<feature type="intramembrane region" description="Helical" evidence="10">
    <location>
        <begin position="1457"/>
        <end position="1477"/>
    </location>
</feature>
<feature type="topological domain" description="Lumenal" evidence="10">
    <location>
        <begin position="1478"/>
        <end position="2162"/>
    </location>
</feature>
<feature type="transmembrane region" description="Helical" evidence="10">
    <location>
        <begin position="2163"/>
        <end position="2183"/>
    </location>
</feature>
<feature type="topological domain" description="Cytoplasmic" evidence="10">
    <location>
        <begin position="2184"/>
        <end position="2191"/>
    </location>
</feature>
<feature type="intramembrane region" description="Helical" evidence="10">
    <location>
        <begin position="2192"/>
        <end position="2211"/>
    </location>
</feature>
<feature type="topological domain" description="Lumenal" evidence="10">
    <location>
        <position position="2212"/>
    </location>
</feature>
<feature type="transmembrane region" description="Helical" evidence="10">
    <location>
        <begin position="2213"/>
        <end position="2233"/>
    </location>
</feature>
<feature type="topological domain" description="Cytoplasmic" evidence="10">
    <location>
        <begin position="2234"/>
        <end position="2246"/>
    </location>
</feature>
<feature type="transmembrane region" description="Helical" evidence="10">
    <location>
        <begin position="2247"/>
        <end position="2267"/>
    </location>
</feature>
<feature type="topological domain" description="Lumenal" evidence="10">
    <location>
        <begin position="2268"/>
        <end position="2301"/>
    </location>
</feature>
<feature type="intramembrane region" description="Helical" evidence="10">
    <location>
        <begin position="2302"/>
        <end position="2322"/>
    </location>
</feature>
<feature type="topological domain" description="Lumenal" evidence="10">
    <location>
        <begin position="2323"/>
        <end position="2345"/>
    </location>
</feature>
<feature type="intramembrane region" description="Helical" evidence="10">
    <location>
        <begin position="2346"/>
        <end position="2366"/>
    </location>
</feature>
<feature type="topological domain" description="Lumenal" evidence="10">
    <location>
        <begin position="2367"/>
        <end position="2368"/>
    </location>
</feature>
<feature type="transmembrane region" description="Helical" evidence="10">
    <location>
        <begin position="2369"/>
        <end position="2389"/>
    </location>
</feature>
<feature type="topological domain" description="Cytoplasmic" evidence="10">
    <location>
        <begin position="2390"/>
        <end position="2432"/>
    </location>
</feature>
<feature type="transmembrane region" description="Helical" evidence="10">
    <location>
        <begin position="2433"/>
        <end position="2453"/>
    </location>
</feature>
<feature type="topological domain" description="Lumenal" evidence="10">
    <location>
        <begin position="2454"/>
        <end position="2476"/>
    </location>
</feature>
<feature type="transmembrane region" description="Helical" evidence="10">
    <location>
        <begin position="2477"/>
        <end position="2497"/>
    </location>
</feature>
<feature type="topological domain" description="Cytoplasmic" evidence="10">
    <location>
        <begin position="2498"/>
        <end position="3416"/>
    </location>
</feature>
<feature type="domain" description="Peptidase S7" evidence="16">
    <location>
        <begin position="1492"/>
        <end position="1671"/>
    </location>
</feature>
<feature type="domain" description="Helicase ATP-binding" evidence="13">
    <location>
        <begin position="1677"/>
        <end position="1833"/>
    </location>
</feature>
<feature type="domain" description="Helicase C-terminal" evidence="14">
    <location>
        <begin position="1844"/>
        <end position="2002"/>
    </location>
</feature>
<feature type="domain" description="mRNA cap 0-1 NS5-type MT" evidence="17">
    <location>
        <begin position="2514"/>
        <end position="2778"/>
    </location>
</feature>
<feature type="domain" description="RdRp catalytic" evidence="12">
    <location>
        <begin position="3042"/>
        <end position="3191"/>
    </location>
</feature>
<feature type="region of interest" description="Disordered" evidence="18">
    <location>
        <begin position="1"/>
        <end position="34"/>
    </location>
</feature>
<feature type="region of interest" description="Fusion peptide" evidence="4">
    <location>
        <begin position="379"/>
        <end position="392"/>
    </location>
</feature>
<feature type="region of interest" description="Interacts with and activates NS3 protease" evidence="15">
    <location>
        <begin position="1412"/>
        <end position="1451"/>
    </location>
</feature>
<feature type="region of interest" description="Interaction with host SCRIB" evidence="6">
    <location>
        <begin position="2732"/>
        <end position="2736"/>
    </location>
</feature>
<feature type="short sequence motif" description="DEAH box" evidence="13">
    <location>
        <begin position="1781"/>
        <end position="1784"/>
    </location>
</feature>
<feature type="active site" description="Charge relay system; for serine protease NS3 activity" evidence="16">
    <location>
        <position position="1545"/>
    </location>
</feature>
<feature type="active site" description="Charge relay system; for serine protease NS3 activity" evidence="16">
    <location>
        <position position="1569"/>
    </location>
</feature>
<feature type="active site" description="Charge relay system; for serine protease NS3 activity" evidence="16">
    <location>
        <position position="1629"/>
    </location>
</feature>
<feature type="active site" description="For 2'-O-MTase activity" evidence="8">
    <location>
        <position position="2574"/>
    </location>
</feature>
<feature type="active site" description="For 2'-O-MTase activity" evidence="8">
    <location>
        <position position="2659"/>
    </location>
</feature>
<feature type="active site" description="For 2'-O-MTase activity" evidence="8">
    <location>
        <position position="2696"/>
    </location>
</feature>
<feature type="active site" description="For 2'-O-MTase activity" evidence="8">
    <location>
        <position position="2732"/>
    </location>
</feature>
<feature type="binding site" evidence="13">
    <location>
        <begin position="1690"/>
        <end position="1697"/>
    </location>
    <ligand>
        <name>ATP</name>
        <dbReference type="ChEBI" id="CHEBI:30616"/>
    </ligand>
</feature>
<feature type="binding site" evidence="17">
    <location>
        <position position="2569"/>
    </location>
    <ligand>
        <name>S-adenosyl-L-methionine</name>
        <dbReference type="ChEBI" id="CHEBI:59789"/>
    </ligand>
</feature>
<feature type="binding site" evidence="17">
    <location>
        <position position="2599"/>
    </location>
    <ligand>
        <name>S-adenosyl-L-methionine</name>
        <dbReference type="ChEBI" id="CHEBI:59789"/>
    </ligand>
</feature>
<feature type="binding site" evidence="17">
    <location>
        <position position="2600"/>
    </location>
    <ligand>
        <name>S-adenosyl-L-methionine</name>
        <dbReference type="ChEBI" id="CHEBI:59789"/>
    </ligand>
</feature>
<feature type="binding site" evidence="17">
    <location>
        <position position="2617"/>
    </location>
    <ligand>
        <name>S-adenosyl-L-methionine</name>
        <dbReference type="ChEBI" id="CHEBI:59789"/>
    </ligand>
</feature>
<feature type="binding site" evidence="17">
    <location>
        <position position="2618"/>
    </location>
    <ligand>
        <name>S-adenosyl-L-methionine</name>
        <dbReference type="ChEBI" id="CHEBI:59789"/>
    </ligand>
</feature>
<feature type="binding site" evidence="17">
    <location>
        <position position="2644"/>
    </location>
    <ligand>
        <name>S-adenosyl-L-methionine</name>
        <dbReference type="ChEBI" id="CHEBI:59789"/>
    </ligand>
</feature>
<feature type="binding site" evidence="17">
    <location>
        <position position="2645"/>
    </location>
    <ligand>
        <name>S-adenosyl-L-methionine</name>
        <dbReference type="ChEBI" id="CHEBI:59789"/>
    </ligand>
</feature>
<feature type="binding site" evidence="17">
    <location>
        <position position="2660"/>
    </location>
    <ligand>
        <name>S-adenosyl-L-methionine</name>
        <dbReference type="ChEBI" id="CHEBI:59789"/>
    </ligand>
</feature>
<feature type="binding site" evidence="17">
    <location>
        <position position="2734"/>
    </location>
    <ligand>
        <name>S-adenosyl-L-methionine</name>
        <dbReference type="ChEBI" id="CHEBI:59789"/>
    </ligand>
</feature>
<feature type="binding site" evidence="3">
    <location>
        <position position="2952"/>
    </location>
    <ligand>
        <name>Zn(2+)</name>
        <dbReference type="ChEBI" id="CHEBI:29105"/>
        <label>1</label>
    </ligand>
</feature>
<feature type="binding site" evidence="3">
    <location>
        <position position="2956"/>
    </location>
    <ligand>
        <name>Zn(2+)</name>
        <dbReference type="ChEBI" id="CHEBI:29105"/>
        <label>1</label>
    </ligand>
</feature>
<feature type="binding site" evidence="3">
    <location>
        <position position="2961"/>
    </location>
    <ligand>
        <name>Zn(2+)</name>
        <dbReference type="ChEBI" id="CHEBI:29105"/>
        <label>1</label>
    </ligand>
</feature>
<feature type="binding site" evidence="3">
    <location>
        <position position="2964"/>
    </location>
    <ligand>
        <name>Zn(2+)</name>
        <dbReference type="ChEBI" id="CHEBI:29105"/>
        <label>1</label>
    </ligand>
</feature>
<feature type="binding site" evidence="3">
    <location>
        <position position="3226"/>
    </location>
    <ligand>
        <name>Zn(2+)</name>
        <dbReference type="ChEBI" id="CHEBI:29105"/>
        <label>2</label>
    </ligand>
</feature>
<feature type="binding site" evidence="3">
    <location>
        <position position="3242"/>
    </location>
    <ligand>
        <name>Zn(2+)</name>
        <dbReference type="ChEBI" id="CHEBI:29105"/>
        <label>2</label>
    </ligand>
</feature>
<feature type="binding site" evidence="3">
    <location>
        <position position="3361"/>
    </location>
    <ligand>
        <name>Zn(2+)</name>
        <dbReference type="ChEBI" id="CHEBI:29105"/>
        <label>2</label>
    </ligand>
</feature>
<feature type="site" description="Cleavage; by viral protease NS3" evidence="1">
    <location>
        <begin position="97"/>
        <end position="98"/>
    </location>
</feature>
<feature type="site" description="Cleavage; by host signal peptidase" evidence="1">
    <location>
        <begin position="118"/>
        <end position="119"/>
    </location>
</feature>
<feature type="site" description="Cleavage; by host furin" evidence="2">
    <location>
        <begin position="206"/>
        <end position="207"/>
    </location>
</feature>
<feature type="site" description="Cleavage; by host signal peptidase" evidence="2">
    <location>
        <begin position="281"/>
        <end position="282"/>
    </location>
</feature>
<feature type="site" description="Cleavage; by host signal peptidase" evidence="1">
    <location>
        <begin position="777"/>
        <end position="778"/>
    </location>
</feature>
<feature type="site" description="Cleavage; by host" evidence="2">
    <location>
        <begin position="1130"/>
        <end position="1131"/>
    </location>
</feature>
<feature type="site" description="Cleavage; by viral protease NS3" evidence="2">
    <location>
        <begin position="1360"/>
        <end position="1361"/>
    </location>
</feature>
<feature type="site" description="Cleavage; by autolysis" evidence="1">
    <location>
        <begin position="1491"/>
        <end position="1492"/>
    </location>
</feature>
<feature type="site" description="Involved in NS3 ATPase and RTPase activities" evidence="3">
    <location>
        <position position="1951"/>
    </location>
</feature>
<feature type="site" description="Involved in NS3 ATPase and RTPase activities" evidence="3">
    <location>
        <position position="1954"/>
    </location>
</feature>
<feature type="site" description="Cleavage; by autolysis" evidence="1">
    <location>
        <begin position="2112"/>
        <end position="2113"/>
    </location>
</feature>
<feature type="site" description="Cleavage; by viral protease NS3" evidence="1">
    <location>
        <begin position="2238"/>
        <end position="2239"/>
    </location>
</feature>
<feature type="site" description="Cleavage; by host signal peptidase" evidence="1">
    <location>
        <begin position="2261"/>
        <end position="2262"/>
    </location>
</feature>
<feature type="site" description="Cleavage; by viral protease NS3" evidence="1">
    <location>
        <begin position="2513"/>
        <end position="2514"/>
    </location>
</feature>
<feature type="site" description="mRNA cap binding" evidence="17">
    <location>
        <position position="2526"/>
    </location>
</feature>
<feature type="site" description="mRNA cap binding; via carbonyl oxygen" evidence="17">
    <location>
        <position position="2529"/>
    </location>
</feature>
<feature type="site" description="mRNA cap binding" evidence="17">
    <location>
        <position position="2530"/>
    </location>
</feature>
<feature type="site" description="mRNA cap binding; via carbonyl oxygen" evidence="17">
    <location>
        <position position="2532"/>
    </location>
</feature>
<feature type="site" description="mRNA cap binding" evidence="17">
    <location>
        <position position="2537"/>
    </location>
</feature>
<feature type="site" description="mRNA cap binding" evidence="17">
    <location>
        <position position="2541"/>
    </location>
</feature>
<feature type="site" description="Essential for 2'-O-methyltransferase activity" evidence="17">
    <location>
        <position position="2574"/>
    </location>
</feature>
<feature type="site" description="Essential for 2'-O-methyltransferase and N-7 methyltransferase activity" evidence="17">
    <location>
        <position position="2659"/>
    </location>
</feature>
<feature type="site" description="mRNA cap binding" evidence="17">
    <location>
        <position position="2663"/>
    </location>
</feature>
<feature type="site" description="Essential for 2'-O-methyltransferase activity" evidence="17">
    <location>
        <position position="2696"/>
    </location>
</feature>
<feature type="site" description="mRNA cap binding" evidence="17">
    <location>
        <position position="2727"/>
    </location>
</feature>
<feature type="site" description="mRNA cap binding" evidence="17">
    <location>
        <position position="2729"/>
    </location>
</feature>
<feature type="site" description="Essential for 2'-O-methyltransferase activity" evidence="17">
    <location>
        <position position="2732"/>
    </location>
</feature>
<feature type="modified residue" description="N6-acetyllysine; by host" evidence="7">
    <location>
        <position position="1885"/>
    </location>
</feature>
<feature type="modified residue" description="Phosphoserine" evidence="1">
    <location>
        <position position="2569"/>
    </location>
</feature>
<feature type="glycosylation site" description="N-linked (GlcNAc...) asparagine; by host" evidence="11">
    <location>
        <position position="145"/>
    </location>
</feature>
<feature type="glycosylation site" description="N-linked (GlcNAc...) asparagine; by host" evidence="11">
    <location>
        <position position="435"/>
    </location>
</feature>
<feature type="glycosylation site" description="N-linked (GlcNAc...) asparagine; by host" evidence="11">
    <location>
        <position position="862"/>
    </location>
</feature>
<feature type="glycosylation site" description="N-linked (GlcNAc...) asparagine; by host" evidence="11">
    <location>
        <position position="985"/>
    </location>
</feature>
<feature type="glycosylation site" description="N-linked (GlcNAc...) asparagine; by host" evidence="11">
    <location>
        <position position="1001"/>
    </location>
</feature>
<feature type="disulfide bond" evidence="2">
    <location>
        <begin position="284"/>
        <end position="311"/>
    </location>
</feature>
<feature type="disulfide bond" evidence="5">
    <location>
        <begin position="341"/>
        <end position="402"/>
    </location>
</feature>
<feature type="disulfide bond" evidence="2">
    <location>
        <begin position="341"/>
        <end position="397"/>
    </location>
</feature>
<feature type="disulfide bond" evidence="2">
    <location>
        <begin position="355"/>
        <end position="386"/>
    </location>
</feature>
<feature type="disulfide bond" evidence="2">
    <location>
        <begin position="373"/>
        <end position="402"/>
    </location>
</feature>
<feature type="disulfide bond" evidence="5">
    <location>
        <begin position="373"/>
        <end position="397"/>
    </location>
</feature>
<feature type="disulfide bond" evidence="2">
    <location>
        <begin position="467"/>
        <end position="571"/>
    </location>
</feature>
<feature type="disulfide bond" evidence="2">
    <location>
        <begin position="588"/>
        <end position="619"/>
    </location>
</feature>
<feature type="disulfide bond" evidence="5">
    <location>
        <begin position="781"/>
        <end position="792"/>
    </location>
</feature>
<feature type="disulfide bond" evidence="5">
    <location>
        <begin position="832"/>
        <end position="922"/>
    </location>
</feature>
<feature type="disulfide bond" evidence="5">
    <location>
        <begin position="957"/>
        <end position="1002"/>
    </location>
</feature>
<feature type="disulfide bond" evidence="5">
    <location>
        <begin position="1059"/>
        <end position="1108"/>
    </location>
</feature>
<feature type="disulfide bond" evidence="5">
    <location>
        <begin position="1070"/>
        <end position="1092"/>
    </location>
</feature>
<feature type="disulfide bond" evidence="5">
    <location>
        <begin position="1091"/>
        <end position="1095"/>
    </location>
</feature>
<feature type="sequence conflict" description="In Ref. 3; AFF18436/AFF18435." evidence="19" ref="3">
    <original>A</original>
    <variation>T</variation>
    <location>
        <position position="404"/>
    </location>
</feature>
<feature type="sequence conflict" description="In Ref. 2; ACA50033 and 3; AFF18436/AFF18435." evidence="19" ref="2 3">
    <original>G</original>
    <variation>E</variation>
    <location>
        <position position="511"/>
    </location>
</feature>
<feature type="sequence conflict" description="In Ref. 3; AFF18436/AFF18435." evidence="19" ref="3">
    <original>V</original>
    <variation>A</variation>
    <location>
        <position position="797"/>
    </location>
</feature>
<feature type="sequence conflict" description="In Ref. 3; AFF18436/AFF18435." evidence="19" ref="3">
    <original>A</original>
    <variation>T</variation>
    <location>
        <position position="1063"/>
    </location>
</feature>
<feature type="sequence conflict" description="In Ref. 1; AAQ91607, 2; ACA50033 and 3; AFF18434/AFF18436/AFF18435." evidence="19" ref="1 2 3">
    <original>S</original>
    <variation>T</variation>
    <location>
        <position position="1163"/>
    </location>
</feature>
<feature type="sequence conflict" description="In Ref. 1; AAQ91607." evidence="19" ref="1">
    <original>E</original>
    <variation>V</variation>
    <location>
        <position position="1843"/>
    </location>
</feature>
<feature type="sequence conflict" description="In Ref. 1; AAQ91607, 2; ACA50033 and 3; AFF18434/AFF18436/AFF18435." evidence="19" ref="1 2 3">
    <original>A</original>
    <variation>T</variation>
    <location>
        <position position="2187"/>
    </location>
</feature>
<feature type="sequence conflict" description="In Ref. 1; AAQ91607." evidence="19" ref="1">
    <original>T</original>
    <variation>A</variation>
    <location>
        <position position="2304"/>
    </location>
</feature>
<feature type="sequence conflict" description="In Ref. 3; AFF18436/AFF18435." evidence="19" ref="3">
    <original>T</original>
    <variation>N</variation>
    <location>
        <position position="3077"/>
    </location>
</feature>
<feature type="helix" evidence="24">
    <location>
        <begin position="1672"/>
        <end position="1674"/>
    </location>
</feature>
<feature type="strand" evidence="24">
    <location>
        <begin position="1675"/>
        <end position="1677"/>
    </location>
</feature>
<feature type="helix" evidence="24">
    <location>
        <begin position="1678"/>
        <end position="1680"/>
    </location>
</feature>
<feature type="strand" evidence="24">
    <location>
        <begin position="1685"/>
        <end position="1688"/>
    </location>
</feature>
<feature type="turn" evidence="24">
    <location>
        <begin position="1696"/>
        <end position="1699"/>
    </location>
</feature>
<feature type="helix" evidence="24">
    <location>
        <begin position="1700"/>
        <end position="1711"/>
    </location>
</feature>
<feature type="strand" evidence="24">
    <location>
        <begin position="1715"/>
        <end position="1721"/>
    </location>
</feature>
<feature type="helix" evidence="24">
    <location>
        <begin position="1722"/>
        <end position="1731"/>
    </location>
</feature>
<feature type="strand" evidence="24">
    <location>
        <begin position="1733"/>
        <end position="1735"/>
    </location>
</feature>
<feature type="strand" evidence="24">
    <location>
        <begin position="1737"/>
        <end position="1739"/>
    </location>
</feature>
<feature type="strand" evidence="24">
    <location>
        <begin position="1753"/>
        <end position="1758"/>
    </location>
</feature>
<feature type="helix" evidence="24">
    <location>
        <begin position="1759"/>
        <end position="1767"/>
    </location>
</feature>
<feature type="helix" evidence="24">
    <location>
        <begin position="1769"/>
        <end position="1771"/>
    </location>
</feature>
<feature type="strand" evidence="24">
    <location>
        <begin position="1776"/>
        <end position="1782"/>
    </location>
</feature>
<feature type="helix" evidence="24">
    <location>
        <begin position="1788"/>
        <end position="1802"/>
    </location>
</feature>
<feature type="strand" evidence="24">
    <location>
        <begin position="1807"/>
        <end position="1811"/>
    </location>
</feature>
<feature type="strand" evidence="24">
    <location>
        <begin position="1816"/>
        <end position="1818"/>
    </location>
</feature>
<feature type="strand" evidence="24">
    <location>
        <begin position="1829"/>
        <end position="1833"/>
    </location>
</feature>
<feature type="helix" evidence="24">
    <location>
        <begin position="1846"/>
        <end position="1850"/>
    </location>
</feature>
<feature type="strand" evidence="24">
    <location>
        <begin position="1855"/>
        <end position="1858"/>
    </location>
</feature>
<feature type="helix" evidence="24">
    <location>
        <begin position="1862"/>
        <end position="1874"/>
    </location>
</feature>
<feature type="strand" evidence="24">
    <location>
        <begin position="1879"/>
        <end position="1882"/>
    </location>
</feature>
<feature type="turn" evidence="24">
    <location>
        <begin position="1884"/>
        <end position="1886"/>
    </location>
</feature>
<feature type="helix" evidence="24">
    <location>
        <begin position="1887"/>
        <end position="1897"/>
    </location>
</feature>
<feature type="strand" evidence="24">
    <location>
        <begin position="1900"/>
        <end position="1904"/>
    </location>
</feature>
<feature type="helix" evidence="24">
    <location>
        <begin position="1906"/>
        <end position="1909"/>
    </location>
</feature>
<feature type="strand" evidence="24">
    <location>
        <begin position="1917"/>
        <end position="1921"/>
    </location>
</feature>
<feature type="strand" evidence="24">
    <location>
        <begin position="1924"/>
        <end position="1926"/>
    </location>
</feature>
<feature type="strand" evidence="24">
    <location>
        <begin position="1929"/>
        <end position="1931"/>
    </location>
</feature>
<feature type="strand" evidence="24">
    <location>
        <begin position="1934"/>
        <end position="1936"/>
    </location>
</feature>
<feature type="strand" evidence="24">
    <location>
        <begin position="1939"/>
        <end position="1942"/>
    </location>
</feature>
<feature type="helix" evidence="24">
    <location>
        <begin position="1945"/>
        <end position="1952"/>
    </location>
</feature>
<feature type="strand" evidence="24">
    <location>
        <begin position="1958"/>
        <end position="1961"/>
    </location>
</feature>
<feature type="strand" evidence="24">
    <location>
        <begin position="1963"/>
        <end position="1967"/>
    </location>
</feature>
<feature type="helix" evidence="24">
    <location>
        <begin position="1979"/>
        <end position="1989"/>
    </location>
</feature>
<feature type="strand" evidence="24">
    <location>
        <begin position="1994"/>
        <end position="1997"/>
    </location>
</feature>
<feature type="helix" evidence="24">
    <location>
        <begin position="2003"/>
        <end position="2008"/>
    </location>
</feature>
<feature type="turn" evidence="24">
    <location>
        <begin position="2013"/>
        <end position="2016"/>
    </location>
</feature>
<feature type="helix" evidence="24">
    <location>
        <begin position="2020"/>
        <end position="2033"/>
    </location>
</feature>
<feature type="helix" evidence="24">
    <location>
        <begin position="2037"/>
        <end position="2046"/>
    </location>
</feature>
<feature type="helix" evidence="24">
    <location>
        <begin position="2054"/>
        <end position="2056"/>
    </location>
</feature>
<feature type="helix" evidence="24">
    <location>
        <begin position="2061"/>
        <end position="2063"/>
    </location>
</feature>
<feature type="strand" evidence="24">
    <location>
        <begin position="2070"/>
        <end position="2072"/>
    </location>
</feature>
<feature type="strand" evidence="24">
    <location>
        <begin position="2074"/>
        <end position="2076"/>
    </location>
</feature>
<feature type="strand" evidence="24">
    <location>
        <begin position="2082"/>
        <end position="2084"/>
    </location>
</feature>
<feature type="helix" evidence="24">
    <location>
        <begin position="2092"/>
        <end position="2094"/>
    </location>
</feature>
<feature type="helix" evidence="24">
    <location>
        <begin position="2101"/>
        <end position="2108"/>
    </location>
</feature>
<accession>D7RF80</accession>
<accession>B1PMU9</accession>
<accession>H8Y6L3</accession>
<accession>H8Y6L4</accession>
<accession>H8Y6L5</accession>
<accession>Q14F58</accession>
<proteinExistence type="evidence at protein level"/>
<comment type="function">
    <molecule>Capsid protein C</molecule>
    <text evidence="5">Plays a role in virus budding by binding to the cell membrane and gathering the viral RNA into a nucleocapsid that forms the core of a mature virus particle. During virus entry, may induce genome penetration into the host cytoplasm after hemifusion induced by the surface proteins. Can migrate to the cell nucleus where it modulates host functions.</text>
</comment>
<comment type="function">
    <molecule>Capsid protein C</molecule>
    <text evidence="1">Inhibits RNA silencing by interfering with host Dicer.</text>
</comment>
<comment type="function">
    <molecule>Peptide pr</molecule>
    <text evidence="5">Prevents premature fusion activity of envelope proteins in trans-Golgi by binding to envelope protein E at pH6.0. After virion release in extracellular space, gets dissociated from E dimers.</text>
</comment>
<comment type="function">
    <molecule>Protein prM</molecule>
    <text evidence="5">Acts as a chaperone for envelope protein E during intracellular virion assembly by masking and inactivating envelope protein E fusion peptide. prM is the only viral peptide matured by host furin in the trans-Golgi network probably to avoid catastrophic activation of the viral fusion activity in acidic Golgi compartment prior to virion release. prM-E cleavage is inefficient, and many virions are only partially matured. These uncleaved prM would play a role in immune evasion.</text>
</comment>
<comment type="function">
    <molecule>Small envelope protein M</molecule>
    <text evidence="5">May play a role in virus budding. Exerts cytotoxic effects by activating a mitochondrial apoptotic pathway through M ectodomain. May display a viroporin activity.</text>
</comment>
<comment type="function">
    <molecule>Envelope protein E</molecule>
    <text evidence="5">Binds to host cell surface receptor and mediates fusion between viral and cellular membranes. Envelope protein is synthesized in the endoplasmic reticulum in the form of heterodimer with protein prM. They play a role in virion budding in the ER, and the newly formed immature particle is covered with 60 spikes composed of heterodimer between precursor prM and envelope protein E. The virion is transported to the Golgi apparatus where the low pH causes dissociation of PrM-E heterodimers and formation of E homodimers. prM-E cleavage is inefficient, and many virions are only partially matured. These uncleaved prM would play a role in immune evasion.</text>
</comment>
<comment type="function">
    <molecule>Non-structural protein 1</molecule>
    <text evidence="9">Involved in immune evasion, pathogenesis and viral replication. Once cleaved off the polyprotein, is targeted to three destinations: the viral replication cycle, the plasma membrane and the extracellular compartment. Essential for viral replication. Required for formation of the replication complex and recruitment of other non-structural proteins to the ER-derived membrane structures. Excreted as a hexameric lipoparticle that plays a role against host immune response. Antagonizing the complement function. Binds to the host macrophages and dendritic cells. Inhibits signal transduction originating from Toll-like receptor 3 (TLR3).</text>
</comment>
<comment type="function">
    <molecule>Non-structural protein 2A</molecule>
    <text evidence="5">Component of the viral RNA replication complex that functions in virion assembly and antagonizes the host immune response.</text>
</comment>
<comment type="function">
    <molecule>Serine protease subunit NS2B</molecule>
    <text evidence="5 15">Required cofactor for the serine protease function of NS3. May have membrane-destabilizing activity and form viroporins (By similarity).</text>
</comment>
<comment type="function">
    <molecule>Serine protease NS3</molecule>
    <text evidence="16">Displays three enzymatic activities: serine protease, NTPase and RNA helicase. NS3 serine protease, in association with NS2B, performs its autocleavage and cleaves the polyprotein at dibasic sites in the cytoplasm: C-prM, NS2A-NS2B, NS2B-NS3, NS3-NS4A, NS4A-2K and NS4B-NS5. NS3 RNA helicase binds RNA and unwinds dsRNA in the 3' to 5' direction.</text>
</comment>
<comment type="function">
    <molecule>Non-structural protein 4A</molecule>
    <text evidence="9">Regulates the ATPase activity of the NS3 helicase activity. NS4A allows NS3 helicase to conserve energy during unwinding.</text>
</comment>
<comment type="function">
    <molecule>Peptide 2k</molecule>
    <text evidence="5">Functions as a signal peptide for NS4B and is required for the interferon antagonism activity of the latter.</text>
</comment>
<comment type="function">
    <molecule>Non-structural protein 4B</molecule>
    <text evidence="9">Induces the formation of ER-derived membrane vesicles where the viral replication takes place. Inhibits interferon (IFN)-induced host STAT1 phosphorylation and nuclear translocation, thereby preventing the establishment of cellular antiviral state by blocking the IFN-alpha/beta pathway. Inhibits STAT2 translocation in the nucleus after IFN-alpha treatment.</text>
</comment>
<comment type="function">
    <molecule>RNA-directed RNA polymerase NS5</molecule>
    <text evidence="5">Replicates the viral (+) and (-) RNA genome, and performs the capping of genomes in the cytoplasm. NS5 methylates viral RNA cap at guanine N-7 and ribose 2'-O positions. Besides its role in RNA genome replication, also prevents the establishment of cellular antiviral state by blocking the interferon-alpha/beta (IFN-alpha/beta) signaling pathway. Inhibits host TYK2 and STAT2 phosphorylation, thereby preventing activation of JAK-STAT signaling pathway.</text>
</comment>
<comment type="catalytic activity">
    <reaction>
        <text>Selective hydrolysis of -Xaa-Xaa-|-Yaa- bonds in which each of the Xaa can be either Arg or Lys and Yaa can be either Ser or Ala.</text>
        <dbReference type="EC" id="3.4.21.91"/>
    </reaction>
</comment>
<comment type="catalytic activity">
    <reaction evidence="12">
        <text>RNA(n) + a ribonucleoside 5'-triphosphate = RNA(n+1) + diphosphate</text>
        <dbReference type="Rhea" id="RHEA:21248"/>
        <dbReference type="Rhea" id="RHEA-COMP:14527"/>
        <dbReference type="Rhea" id="RHEA-COMP:17342"/>
        <dbReference type="ChEBI" id="CHEBI:33019"/>
        <dbReference type="ChEBI" id="CHEBI:61557"/>
        <dbReference type="ChEBI" id="CHEBI:140395"/>
        <dbReference type="EC" id="2.7.7.48"/>
    </reaction>
</comment>
<comment type="catalytic activity">
    <reaction>
        <text>a ribonucleoside 5'-triphosphate + H2O = a ribonucleoside 5'-diphosphate + phosphate + H(+)</text>
        <dbReference type="Rhea" id="RHEA:23680"/>
        <dbReference type="ChEBI" id="CHEBI:15377"/>
        <dbReference type="ChEBI" id="CHEBI:15378"/>
        <dbReference type="ChEBI" id="CHEBI:43474"/>
        <dbReference type="ChEBI" id="CHEBI:57930"/>
        <dbReference type="ChEBI" id="CHEBI:61557"/>
        <dbReference type="EC" id="3.6.1.15"/>
    </reaction>
</comment>
<comment type="catalytic activity">
    <reaction>
        <text>ATP + H2O = ADP + phosphate + H(+)</text>
        <dbReference type="Rhea" id="RHEA:13065"/>
        <dbReference type="ChEBI" id="CHEBI:15377"/>
        <dbReference type="ChEBI" id="CHEBI:15378"/>
        <dbReference type="ChEBI" id="CHEBI:30616"/>
        <dbReference type="ChEBI" id="CHEBI:43474"/>
        <dbReference type="ChEBI" id="CHEBI:456216"/>
        <dbReference type="EC" id="3.6.4.13"/>
    </reaction>
</comment>
<comment type="catalytic activity">
    <reaction evidence="17">
        <text>a 5'-end (5'-triphosphoguanosine)-ribonucleoside in mRNA + S-adenosyl-L-methionine = a 5'-end (N(7)-methyl 5'-triphosphoguanosine)-ribonucleoside in mRNA + S-adenosyl-L-homocysteine</text>
        <dbReference type="Rhea" id="RHEA:67008"/>
        <dbReference type="Rhea" id="RHEA-COMP:17166"/>
        <dbReference type="Rhea" id="RHEA-COMP:17167"/>
        <dbReference type="ChEBI" id="CHEBI:57856"/>
        <dbReference type="ChEBI" id="CHEBI:59789"/>
        <dbReference type="ChEBI" id="CHEBI:156461"/>
        <dbReference type="ChEBI" id="CHEBI:167617"/>
        <dbReference type="EC" id="2.1.1.56"/>
    </reaction>
</comment>
<comment type="catalytic activity">
    <reaction evidence="17">
        <text>a 5'-end (N(7)-methyl 5'-triphosphoguanosine)-ribonucleoside in mRNA + S-adenosyl-L-methionine = a 5'-end (N(7)-methyl 5'-triphosphoguanosine)-(2'-O-methyl-ribonucleoside) in mRNA + S-adenosyl-L-homocysteine + H(+)</text>
        <dbReference type="Rhea" id="RHEA:67020"/>
        <dbReference type="Rhea" id="RHEA-COMP:17167"/>
        <dbReference type="Rhea" id="RHEA-COMP:17168"/>
        <dbReference type="ChEBI" id="CHEBI:15378"/>
        <dbReference type="ChEBI" id="CHEBI:57856"/>
        <dbReference type="ChEBI" id="CHEBI:59789"/>
        <dbReference type="ChEBI" id="CHEBI:156461"/>
        <dbReference type="ChEBI" id="CHEBI:167609"/>
        <dbReference type="EC" id="2.1.1.57"/>
    </reaction>
</comment>
<comment type="subunit">
    <molecule>Capsid protein C</molecule>
    <text evidence="5">Homodimer (By similarity). Interacts (via N-terminus) with host EXOC1 (via C-terminus); this interaction results in EXOC1 degradation through the proteasome degradation pathway (By similarity).</text>
</comment>
<comment type="subunit">
    <molecule>Protein prM</molecule>
    <text evidence="5">Forms heterodimers with envelope protein E in the endoplasmic reticulum and Golgi.</text>
</comment>
<comment type="subunit">
    <molecule>Envelope protein E</molecule>
    <text evidence="5">Homodimer; in the endoplasmic reticulum and Golgi (By similarity). Interacts with protein prM (By similarity). Interacts with non-structural protein 1 (By similarity).</text>
</comment>
<comment type="subunit">
    <molecule>Non-structural protein 1</molecule>
    <text evidence="9">Homodimer; Homohexamer when secreted (By similarity). Interacts with envelope protein E (By similarity). NS1 interacts with NS4B (By similarity). Interacts with host complement protein CFH; this interaction leads to the degradation of C3 (By similarity).</text>
</comment>
<comment type="subunit">
    <molecule>Non-structural protein 2A</molecule>
    <text evidence="1">Interacts (via N-terminus) with serine protease NS3.</text>
</comment>
<comment type="subunit">
    <molecule>Serine protease subunit NS2B</molecule>
    <text evidence="5">Forms a heterodimer with serine protease NS3 (By similarity). May form homooligomers (By similarity).</text>
</comment>
<comment type="subunit">
    <molecule>Serine protease NS3</molecule>
    <text evidence="5">Forms a heterodimer with NS2B (By similarity). Interacts with non-structural protein 2A (via N-terminus) (By similarity). Interacts with NS4B (By similarity). Interacts with unphosphorylated RNA-directed RNA polymerase NS5; this interaction stimulates RNA-directed RNA polymerase NS5 guanylyltransferase activity (By similarity).</text>
</comment>
<comment type="subunit">
    <molecule>Non-structural protein 4B</molecule>
    <text evidence="5">Interacts with serine protease NS3 (By similarity).</text>
</comment>
<comment type="subunit">
    <molecule>RNA-directed RNA polymerase NS5</molecule>
    <text evidence="5">Homodimer. Interacts with host STAT2; this interaction inhibits the phosphorylation of the latter, and, when all viral proteins are present (polyprotein), targets STAT2 for degradation. Interacts with serine protease NS3.</text>
</comment>
<comment type="subcellular location">
    <molecule>Capsid protein C</molecule>
    <subcellularLocation>
        <location evidence="5">Virion</location>
    </subcellularLocation>
    <subcellularLocation>
        <location evidence="5">Host nucleus</location>
    </subcellularLocation>
    <subcellularLocation>
        <location evidence="5">Host cytoplasm</location>
        <location evidence="5">Host perinuclear region</location>
    </subcellularLocation>
    <subcellularLocation>
        <location evidence="5">Host cytoplasm</location>
    </subcellularLocation>
</comment>
<comment type="subcellular location">
    <molecule>Peptide pr</molecule>
    <subcellularLocation>
        <location evidence="5">Secreted</location>
    </subcellularLocation>
</comment>
<comment type="subcellular location">
    <molecule>Small envelope protein M</molecule>
    <subcellularLocation>
        <location evidence="1">Virion membrane</location>
        <topology evidence="1">Multi-pass membrane protein</topology>
    </subcellularLocation>
    <subcellularLocation>
        <location evidence="1">Host endoplasmic reticulum membrane</location>
        <topology evidence="10">Multi-pass membrane protein</topology>
    </subcellularLocation>
    <text evidence="1">ER membrane retention is mediated by the transmembrane domains.</text>
</comment>
<comment type="subcellular location">
    <molecule>Envelope protein E</molecule>
    <subcellularLocation>
        <location evidence="19">Virion membrane</location>
        <topology evidence="1">Multi-pass membrane protein</topology>
    </subcellularLocation>
    <subcellularLocation>
        <location evidence="1">Host endoplasmic reticulum membrane</location>
        <topology evidence="10">Multi-pass membrane protein</topology>
    </subcellularLocation>
    <text evidence="1">ER membrane retention is mediated by the transmembrane domains.</text>
</comment>
<comment type="subcellular location">
    <molecule>Non-structural protein 1</molecule>
    <subcellularLocation>
        <location evidence="5">Secreted</location>
    </subcellularLocation>
    <subcellularLocation>
        <location>Host endoplasmic reticulum membrane</location>
        <topology>Peripheral membrane protein</topology>
        <orientation evidence="5">Lumenal side</orientation>
    </subcellularLocation>
    <text evidence="9">Located in RE-derived vesicles hosting the replication complex.</text>
</comment>
<comment type="subcellular location">
    <molecule>Non-structural protein 2A</molecule>
    <subcellularLocation>
        <location evidence="3">Host endoplasmic reticulum membrane</location>
        <topology evidence="5">Multi-pass membrane protein</topology>
    </subcellularLocation>
</comment>
<comment type="subcellular location">
    <molecule>Serine protease subunit NS2B</molecule>
    <subcellularLocation>
        <location>Host endoplasmic reticulum membrane</location>
        <topology evidence="5">Multi-pass membrane protein</topology>
    </subcellularLocation>
</comment>
<comment type="subcellular location">
    <molecule>Serine protease NS3</molecule>
    <subcellularLocation>
        <location evidence="16">Host endoplasmic reticulum membrane</location>
        <topology evidence="16">Peripheral membrane protein</topology>
        <orientation evidence="16">Cytoplasmic side</orientation>
    </subcellularLocation>
    <text evidence="16">Remains non-covalently associated to serine protease subunit NS2B.</text>
</comment>
<comment type="subcellular location">
    <molecule>Non-structural protein 4A</molecule>
    <subcellularLocation>
        <location evidence="3">Host endoplasmic reticulum membrane</location>
        <topology evidence="5">Multi-pass membrane protein</topology>
    </subcellularLocation>
    <text evidence="5">Located in RE-associated vesicles hosting the replication complex.</text>
</comment>
<comment type="subcellular location">
    <molecule>Non-structural protein 4B</molecule>
    <subcellularLocation>
        <location evidence="5">Host endoplasmic reticulum membrane</location>
        <topology evidence="5">Multi-pass membrane protein</topology>
    </subcellularLocation>
    <text evidence="9">Located in RE-derived vesicles hosting the replication complex.</text>
</comment>
<comment type="subcellular location">
    <molecule>RNA-directed RNA polymerase NS5</molecule>
    <subcellularLocation>
        <location>Host endoplasmic reticulum membrane</location>
        <topology>Peripheral membrane protein</topology>
        <orientation>Cytoplasmic side</orientation>
    </subcellularLocation>
    <subcellularLocation>
        <location evidence="2">Host nucleus</location>
    </subcellularLocation>
    <text evidence="5">Located in RE-associated vesicles hosting the replication complex. NS5 protein is mainly localized in the nucleus rather than in ER vesicles.</text>
</comment>
<comment type="domain">
    <text evidence="5">The transmembrane domains of the small envelope protein M and envelope protein E contain an endoplasmic reticulum retention signal.</text>
</comment>
<comment type="PTM">
    <molecule>Genome polyprotein</molecule>
    <text evidence="5">Specific enzymatic cleavages in vivo yield mature proteins. Cleavages in the lumen of endoplasmic reticulum are performed by host signal peptidase, whereas cleavages in the cytoplasmic side are performed by serine protease NS3. Signal cleavage at the 2K-4B site requires a prior NS3 protease-mediated cleavage at the 4A-2K site.</text>
</comment>
<comment type="PTM">
    <molecule>Protein prM</molecule>
    <text evidence="5">Cleaved in post-Golgi vesicles by a host furin, releasing the mature small envelope protein M, and peptide pr. This cleavage is incomplete as up to 30% of viral particles still carry uncleaved prM.</text>
</comment>
<comment type="PTM">
    <molecule>Envelope protein E</molecule>
    <text evidence="5">N-glycosylated.</text>
</comment>
<comment type="PTM">
    <molecule>Non-structural protein 1</molecule>
    <text evidence="5">N-glycosylated. The excreted form is glycosylated and this is required for efficient secretion of the protein from infected cells.</text>
</comment>
<comment type="PTM">
    <molecule>Serine protease NS3</molecule>
    <text evidence="7">Acetylated by host KAT5. Acetylation modulates NS3 RNA-binding and unwinding activities and plays an important positive role for viral replication.</text>
</comment>
<comment type="PTM">
    <molecule>RNA-directed RNA polymerase NS5</molecule>
    <text evidence="5">Phosphorylated on serines residues. This phosphorylation may trigger NS5 nuclear localization.</text>
</comment>
<comment type="similarity">
    <text evidence="17">In the N-terminal section; belongs to the class I-like SAM-binding methyltransferase superfamily. mRNA cap 0-1 NS5-type methyltransferase family.</text>
</comment>
<keyword id="KW-0002">3D-structure</keyword>
<keyword id="KW-0007">Acetylation</keyword>
<keyword id="KW-1072">Activation of host autophagy by virus</keyword>
<keyword id="KW-0067">ATP-binding</keyword>
<keyword id="KW-0167">Capsid protein</keyword>
<keyword id="KW-0165">Cleavage on pair of basic residues</keyword>
<keyword id="KW-1015">Disulfide bond</keyword>
<keyword id="KW-1170">Fusion of virus membrane with host endosomal membrane</keyword>
<keyword id="KW-1168">Fusion of virus membrane with host membrane</keyword>
<keyword id="KW-0325">Glycoprotein</keyword>
<keyword id="KW-0347">Helicase</keyword>
<keyword id="KW-1035">Host cytoplasm</keyword>
<keyword id="KW-1038">Host endoplasmic reticulum</keyword>
<keyword id="KW-1043">Host membrane</keyword>
<keyword id="KW-1048">Host nucleus</keyword>
<keyword id="KW-0945">Host-virus interaction</keyword>
<keyword id="KW-0378">Hydrolase</keyword>
<keyword id="KW-1090">Inhibition of host innate immune response by virus</keyword>
<keyword id="KW-1114">Inhibition of host interferon signaling pathway by virus</keyword>
<keyword id="KW-1105">Inhibition of host STAT1 by virus</keyword>
<keyword id="KW-1106">Inhibition of host STAT2 by virus</keyword>
<keyword id="KW-0922">Interferon antiviral system evasion</keyword>
<keyword id="KW-0472">Membrane</keyword>
<keyword id="KW-0479">Metal-binding</keyword>
<keyword id="KW-0489">Methyltransferase</keyword>
<keyword id="KW-0506">mRNA capping</keyword>
<keyword id="KW-0507">mRNA processing</keyword>
<keyword id="KW-0547">Nucleotide-binding</keyword>
<keyword id="KW-0548">Nucleotidyltransferase</keyword>
<keyword id="KW-0597">Phosphoprotein</keyword>
<keyword id="KW-0645">Protease</keyword>
<keyword id="KW-0694">RNA-binding</keyword>
<keyword id="KW-0696">RNA-directed RNA polymerase</keyword>
<keyword id="KW-0949">S-adenosyl-L-methionine</keyword>
<keyword id="KW-0964">Secreted</keyword>
<keyword id="KW-0720">Serine protease</keyword>
<keyword id="KW-0941">Suppressor of RNA silencing</keyword>
<keyword id="KW-0808">Transferase</keyword>
<keyword id="KW-0812">Transmembrane</keyword>
<keyword id="KW-1133">Transmembrane helix</keyword>
<keyword id="KW-1161">Viral attachment to host cell</keyword>
<keyword id="KW-0899">Viral immunoevasion</keyword>
<keyword id="KW-1162">Viral penetration into host cytoplasm</keyword>
<keyword id="KW-0693">Viral RNA replication</keyword>
<keyword id="KW-0946">Virion</keyword>
<keyword id="KW-1160">Virus entry into host cell</keyword>
<keyword id="KW-0862">Zinc</keyword>
<reference key="1">
    <citation type="journal article" date="2007" name="Virology">
        <title>Genetic characterization of tick-borne flaviviruses: new insights into evolution, pathogenetic determinants and taxonomy.</title>
        <authorList>
            <person name="Grard G."/>
            <person name="Moureau G."/>
            <person name="Charrel R.N."/>
            <person name="Lemasson J.J."/>
            <person name="Gonzalez J.P."/>
            <person name="Gallian P."/>
            <person name="Gritsun T.S."/>
            <person name="Holmes E.C."/>
            <person name="Gould E.A."/>
            <person name="de Lamballerie X."/>
        </authorList>
    </citation>
    <scope>NUCLEOTIDE SEQUENCE [LARGE SCALE GENOMIC RNA]</scope>
</reference>
<reference key="2">
    <citation type="submission" date="2008-02" db="EMBL/GenBank/DDBJ databases">
        <authorList>
            <person name="Zhuravleva M.M."/>
            <person name="Usacheva O.V."/>
            <person name="Prilipov A.G."/>
        </authorList>
    </citation>
    <scope>NUCLEOTIDE SEQUENCE [LARGE SCALE GENOMIC RNA]</scope>
</reference>
<reference key="3">
    <citation type="journal article" date="2011" name="PLoS Negl. Trop. Dis.">
        <title>Ancient ancestry of KFDV and AHFV revealed by complete genome analyses of viruses isolated from ticks and mammalian hosts.</title>
        <authorList>
            <person name="Dodd K.A."/>
            <person name="Bird B.H."/>
            <person name="Khristova M.L."/>
            <person name="Albarino C.G."/>
            <person name="Carroll S.A."/>
            <person name="Comer J.A."/>
            <person name="Erickson B.R."/>
            <person name="Rollin P.E."/>
            <person name="Nichol S.T."/>
        </authorList>
    </citation>
    <scope>NUCLEOTIDE SEQUENCE [LARGE SCALE GENOMIC RNA]</scope>
    <source>
        <strain evidence="22">G11338</strain>
        <strain evidence="21">P9605</strain>
        <strain evidence="23">W-377</strain>
    </source>
</reference>
<reference key="4">
    <citation type="journal article" date="2012" name="Virus Res.">
        <title>The generation of a reverse genetics system for Kyasanur forest disease virus and the ability to antagonize the induction of the antiviral state in vitro.</title>
        <authorList>
            <person name="Cook B.W."/>
            <person name="Cutts T.A."/>
            <person name="Court D.A."/>
            <person name="Theriault S."/>
        </authorList>
    </citation>
    <scope>NUCLEOTIDE SEQUENCE [LARGE SCALE GENOMIC RNA]</scope>
    <source>
        <strain evidence="20">KFD P 9605</strain>
    </source>
</reference>
<organismHost>
    <name type="scientific">Homo sapiens</name>
    <name type="common">Human</name>
    <dbReference type="NCBI Taxonomy" id="9606"/>
</organismHost>
<organismHost>
    <name type="scientific">Hyalomma dromedarii</name>
    <name type="common">Camel tick</name>
    <dbReference type="NCBI Taxonomy" id="34626"/>
</organismHost>
<organismHost>
    <name type="scientific">Ornithodoros savignyi</name>
    <name type="common">African eyed tampan</name>
    <name type="synonym">Soft tick</name>
    <dbReference type="NCBI Taxonomy" id="69826"/>
</organismHost>
<organismHost>
    <name type="scientific">Semnopithecus entellus</name>
    <name type="common">Northern plains gray langur</name>
    <name type="synonym">Presbytis entellus</name>
    <dbReference type="NCBI Taxonomy" id="88029"/>
</organismHost>
<name>POLG_KFDV</name>
<sequence length="3416" mass="377417">MAKGAVLKGKGGGPPRRVPKETAKKTRQGPGRLPNGLVLMRMMGVLWHMVAGTARNPILKRFWATVPVRQAIAALRKIRKTVGLLLDSLNKRRGKRRSTTGLLTPILLACLATLVFSATVRRERTGNMVIRAEGKDAATQVEVMNGTCTILATDMGSWCDDSIMYECVTIDSGEEPVDVDCFCKGVERVSLEYGRCGKPAGGRNRRSVSIPVHAHSDLTGRGHKWLKGDSVKTHLTRVEGWVWKNKFLTAAFCAVVWMVTDSLPTRFIVITVALCLAPTYATRCTHLQNRDFVSGTQGTTRVSLVLELGGCVTLTAEGKPSVDVWLDDIHQENPAKTREYCLHAKLANSKVAARCPAMGPATLPEEHQASTVCRRDQSDRGWGNHCGLFGKGSIVACAKFSCEAKKKATGYVYDVNKITYVVKVEPHTGDYLAANESHSNRKTASFTTQSEKTILTLGDYGDISLTCRVTSGVDPAQTVVLELDKTAEHLPKAWQVHRDWFEDLSLPWRHGGAQEWNHADRLVEFGEPHAVKMDIFNLGDQTGILLKSLAGVPVANIEGSKYHLQSGHVTCDVGLEKLKMKGMTYTVCEGSKFAWKRPPTDSGHDTVVMEVTYTGSKPCRIPVRAVAHGEPNVNVASLITPNPSMETTGGGFVELQLPPGDNIIYVGELSHQWFQKGSTIGRVLEKTRRGIERLTVVGEHAWDFGSVGGMLSSVGKALHTAFGAAFNTIFGGVGFLPRILLGVALAWLGLNSRNPTLSVGFLITGGLVLTMTLGVGADMGCAIDANRMELRCGEGLVVWREVTDWYDGYAFHPESPSVLAASLKEAYEEGICGIVPQNRLEMAMWRRVEAVLNLALAESDANLTVVVDKRDPSDYRGGKVGTLRRSGKEMKTSWKGWSQSFVWSVPEAPRRFMVGVEGAGECPLDKRRTGVFTVAEFGMGMRTKVFLDLRETASSDCDTGVMGAAVKSGHAVHTDQSLWMRSHRNATGVFISELIVTDLRNCTWPASHTLDNAGVVDSKLFLPAGLAGPRSHYNHIPGYAEQVKGPWSQTPLRVVREPCPGTAVKIDQSCDKRGASLRSTTESGKAIPEWCCRTCELPPVTFRSGTDCWYAMEIRPVHQQGGLVRSMVLADNGAMLSEGGVPGIVAVFVVLELVIRRRPTTGSSVVWCGMVVLGLVVTGLVTIEGLCRYVVAVGILMSMELGPEIVALVLLQAVFDMRTGLLVAFAVKRAYTTREAVATYFLLLVLELGFPEASLSNIWKWADSLAMGALILQACGQEGRTRVGYLLAAMMTQKDMVIIHTGLTIFLSAATAMAVWSMIKGQRDQKGLSWATPLAGLLGGEGVGLRLLAFRKLAERRNRRSFSEPLTVVGVMLTVASGMVRHTSQEALCALVAGAFLLLMMVLGTRKMQLTAEWCGEVEWNPDLVNEGGEVNLKVRQDAMGNLHLTEVEKEERAMALWLLAGLVASAFHWAGILIVLAVWTLFEMLGSGRRSELVFSGQETRTERNRPFEIKDGAYRIYSPGLLWGHRQIGVGYGAKGVLHTMWHVTRGAALVVDEAISGPYWADVREDVVCYGGAWSLESRWRGETVQVHAFPPGRPQETHQCQPGELILENGRKLGAVPIDLSKGTSGSPIINAQGEVVGLYGNGLKTNEAYVSSIAQGEAEKSRPEIPLSVQGTGWMSKGQITVLDMHPGSGKTHRVLPELVRQCADRGMRTLVLAPTRVVLKEMERALAGKKVRFHSPAVEGQTTAGAIVDVMCHATYVHRRLLPQGRQNWEVAIMDEAHWTDPHSIAARGHLYSLAKENRCALVLMTATPPGRGDPFPESNGAIMSEERAIPDGEWREGFDWITEYEGRTAWFVPSISKGGAVARTLRQRGKSVICLNSKTFEKDYLRVREEKPDFVVTTDISEMGANLDVSRVIDGRTNIKPEEVDGKVELTGTRKVTTASAAQRRGRVGRTSGRTDEYIYSGQCDDDDTSLVQWKEAQILLDNITTLRGPVATFYGPEQVKMPEVAGHYRLNEEKRKHFRHLMTQCDFTPWLAWHVATNTSNVLDRSWTWQGPEENAIDGADGDLVRFKTPGGSERVLQPVWKDCRMFREGRDVKDFILYASGRRSVGDVLGGLAGVPGLLRHRCASALDVVYTLLNENPGSRAMRMAERDAPEAFLTIVEVAVLGVATLGILWCFVARASVSRMFLGTVVLFAALFLLWIGGVDYGHMAGIALIFYTLLTVLQPEPGKQRSSDDNRLAYFLLGLFSLAGLVTANEMGMLDKTKADLAGLVWRGEQRHPAWEEWTNVDIQPARSWGTYVLIVSLFTPYMLHQLQTKIQQLVNSSVASGAQAMRDLGGGTPFFGVAGHVIALGVTSLVGATPMSLGLGVALAAFHLAIVASGLEAELTQRAHRVFFSAMVKNPMVDGDVINPFPDGETKPALYERRMSLILAIALCMGSVVLNRTAASMTEAGAVGLAALGQLVHPETETLWTMPMACGMAGLVRGSFWGLLPMGHRLWLRTTGTRRGGAEGETLGDIWKRRLNGCSREEFFQYRRSGVMETERDKARELLKRGETNMGLAVSRGTAKLAWLEERGYATLKGEVVDLGCGRGGWSYYAASRPAVMGVKAYTIGGKGHEVPRLITSLGWNLIKFRTGMDVYSLEAHRADTILCDIGESSPDPLAEGERSRRVILLMEKWKLRNPDASCVFKVLAPYRPEVLEALHRFQLQWGGGLVRVPFSRNSTHEMYFSTAISGNIINSVNTQSRKLLARFGDQRGPTKVPEVDLGTGTRCVVLAEDKVREADVAERIAALKTQYGDSWHVDKEHPYRTWQYWGSYKTEATGSAASLINGVVKLLSWPWNAREDVVRMAMTDTTAFGQQRVFKEKVDTKAQEPQVGTKIIMRAVNDWIFERLAGKKTPRLCTREEFIAKVRSNAALGAWSDEQNRWPNAREAVEDPEFWRLVDEERERHLGGRCAQCVYNMMGKREKKLGEFGVAKGSRAIWYMWLGSRYLEFEALGFLNEDHWASRDLSGAGVEGTSLNYLGWHLKKLSELEGGLFYADDTAGWDTRITNADLEDEEQILRYLEGEHRTLAKTILEKAYHAKVVKVARPSSSGGCVMDIITRRDQRGSGQVVTYALNTLTNIKVQLIRMMEGEGVIGPSDSQDPRLLRVEAWLKEHGEERLTRMLVSGDDCVVRPIDDRFGKALYFLNDMAKVRKDIGEWEPSEGYSSWEEVPFCSHHFHELTMKDGRVIIVPCRDQDELVGRARVSPGCGWSVRETACLSKAYGQMWLLSYFHRRDLRTLGLAICSAVPIDWVPQGRTTWSIHASGAWMTTEDMLEVWNRVWILDNPFMGDKGKVREWRDIPYLPKSQDGLCSSLVGRRERAEWAKNIWGSVEKVRRMIGPERYADYLSCMDRHELHWDLKLESNII</sequence>
<protein>
    <recommendedName>
        <fullName>Genome polyprotein</fullName>
    </recommendedName>
    <component>
        <recommendedName>
            <fullName>Capsid protein C</fullName>
        </recommendedName>
        <alternativeName>
            <fullName>Core protein</fullName>
        </alternativeName>
    </component>
    <component>
        <recommendedName>
            <fullName>Protein prM</fullName>
        </recommendedName>
    </component>
    <component>
        <recommendedName>
            <fullName>Peptide pr</fullName>
        </recommendedName>
    </component>
    <component>
        <recommendedName>
            <fullName>Small envelope protein M</fullName>
        </recommendedName>
        <alternativeName>
            <fullName>Matrix protein</fullName>
        </alternativeName>
    </component>
    <component>
        <recommendedName>
            <fullName>Envelope protein E</fullName>
        </recommendedName>
    </component>
    <component>
        <recommendedName>
            <fullName>Non-structural protein 1</fullName>
            <shortName>NS1</shortName>
        </recommendedName>
    </component>
    <component>
        <recommendedName>
            <fullName>Non-structural protein 2A</fullName>
            <shortName>NS2A</shortName>
        </recommendedName>
    </component>
    <component>
        <recommendedName>
            <fullName>Serine protease subunit NS2B</fullName>
        </recommendedName>
        <alternativeName>
            <fullName>Flavivirin protease NS2B regulatory subunit</fullName>
        </alternativeName>
        <alternativeName>
            <fullName>Non-structural protein 2B</fullName>
        </alternativeName>
    </component>
    <component>
        <recommendedName>
            <fullName>Serine protease NS3</fullName>
            <ecNumber>3.4.21.91</ecNumber>
            <ecNumber>3.6.1.15</ecNumber>
            <ecNumber>3.6.4.13</ecNumber>
        </recommendedName>
        <alternativeName>
            <fullName>Flavivirin protease NS3 catalytic subunit</fullName>
        </alternativeName>
        <alternativeName>
            <fullName>Non-structural protein 3</fullName>
        </alternativeName>
    </component>
    <component>
        <recommendedName>
            <fullName>Non-structural protein 4A</fullName>
            <shortName>NS4A</shortName>
        </recommendedName>
    </component>
    <component>
        <recommendedName>
            <fullName>Peptide 2k</fullName>
        </recommendedName>
    </component>
    <component>
        <recommendedName>
            <fullName>Non-structural protein 4B</fullName>
            <shortName>NS4B</shortName>
        </recommendedName>
    </component>
    <component>
        <recommendedName>
            <fullName>RNA-directed RNA polymerase NS5</fullName>
            <ecNumber evidence="17">2.1.1.56</ecNumber>
            <ecNumber evidence="17">2.1.1.57</ecNumber>
            <ecNumber evidence="12">2.7.7.48</ecNumber>
        </recommendedName>
        <alternativeName>
            <fullName>Non-structural protein 5</fullName>
        </alternativeName>
    </component>
</protein>
<evidence type="ECO:0000250" key="1">
    <source>
        <dbReference type="UniProtKB" id="P03314"/>
    </source>
</evidence>
<evidence type="ECO:0000250" key="2">
    <source>
        <dbReference type="UniProtKB" id="P06935"/>
    </source>
</evidence>
<evidence type="ECO:0000250" key="3">
    <source>
        <dbReference type="UniProtKB" id="P14335"/>
    </source>
</evidence>
<evidence type="ECO:0000250" key="4">
    <source>
        <dbReference type="UniProtKB" id="P14336"/>
    </source>
</evidence>
<evidence type="ECO:0000250" key="5">
    <source>
        <dbReference type="UniProtKB" id="P17763"/>
    </source>
</evidence>
<evidence type="ECO:0000250" key="6">
    <source>
        <dbReference type="UniProtKB" id="Q01299"/>
    </source>
</evidence>
<evidence type="ECO:0000250" key="7">
    <source>
        <dbReference type="UniProtKB" id="Q32ZE1"/>
    </source>
</evidence>
<evidence type="ECO:0000250" key="8">
    <source>
        <dbReference type="UniProtKB" id="Q6YMS4"/>
    </source>
</evidence>
<evidence type="ECO:0000250" key="9">
    <source>
        <dbReference type="UniProtKB" id="Q9Q6P4"/>
    </source>
</evidence>
<evidence type="ECO:0000255" key="10"/>
<evidence type="ECO:0000255" key="11">
    <source>
        <dbReference type="PROSITE-ProRule" id="PRU00498"/>
    </source>
</evidence>
<evidence type="ECO:0000255" key="12">
    <source>
        <dbReference type="PROSITE-ProRule" id="PRU00539"/>
    </source>
</evidence>
<evidence type="ECO:0000255" key="13">
    <source>
        <dbReference type="PROSITE-ProRule" id="PRU00541"/>
    </source>
</evidence>
<evidence type="ECO:0000255" key="14">
    <source>
        <dbReference type="PROSITE-ProRule" id="PRU00542"/>
    </source>
</evidence>
<evidence type="ECO:0000255" key="15">
    <source>
        <dbReference type="PROSITE-ProRule" id="PRU00859"/>
    </source>
</evidence>
<evidence type="ECO:0000255" key="16">
    <source>
        <dbReference type="PROSITE-ProRule" id="PRU00860"/>
    </source>
</evidence>
<evidence type="ECO:0000255" key="17">
    <source>
        <dbReference type="PROSITE-ProRule" id="PRU00924"/>
    </source>
</evidence>
<evidence type="ECO:0000256" key="18">
    <source>
        <dbReference type="SAM" id="MobiDB-lite"/>
    </source>
</evidence>
<evidence type="ECO:0000305" key="19"/>
<evidence type="ECO:0000312" key="20">
    <source>
        <dbReference type="EMBL" id="ADH95737.1"/>
    </source>
</evidence>
<evidence type="ECO:0000312" key="21">
    <source>
        <dbReference type="EMBL" id="AFF18434.1"/>
    </source>
</evidence>
<evidence type="ECO:0000312" key="22">
    <source>
        <dbReference type="EMBL" id="AFF18435.1"/>
    </source>
</evidence>
<evidence type="ECO:0000312" key="23">
    <source>
        <dbReference type="EMBL" id="AFF18436.1"/>
    </source>
</evidence>
<evidence type="ECO:0007829" key="24">
    <source>
        <dbReference type="PDB" id="7V4Q"/>
    </source>
</evidence>
<organism>
    <name type="scientific">Kyasanur forest disease virus</name>
    <name type="common">KFDV</name>
    <dbReference type="NCBI Taxonomy" id="33743"/>
    <lineage>
        <taxon>Viruses</taxon>
        <taxon>Riboviria</taxon>
        <taxon>Orthornavirae</taxon>
        <taxon>Kitrinoviricota</taxon>
        <taxon>Flasuviricetes</taxon>
        <taxon>Amarillovirales</taxon>
        <taxon>Flaviviridae</taxon>
        <taxon>Orthoflavivirus</taxon>
        <taxon>Orthoflavivirus kyasanurense</taxon>
    </lineage>
</organism>
<dbReference type="EC" id="3.4.21.91"/>
<dbReference type="EC" id="3.6.1.15"/>
<dbReference type="EC" id="3.6.4.13"/>
<dbReference type="EC" id="2.1.1.56" evidence="17"/>
<dbReference type="EC" id="2.1.1.57" evidence="17"/>
<dbReference type="EC" id="2.7.7.48" evidence="12"/>
<dbReference type="EMBL" id="AY323490">
    <property type="protein sequence ID" value="AAQ91607.1"/>
    <property type="molecule type" value="Genomic_RNA"/>
</dbReference>
<dbReference type="EMBL" id="EU480689">
    <property type="protein sequence ID" value="ACA50033.1"/>
    <property type="molecule type" value="Genomic_RNA"/>
</dbReference>
<dbReference type="EMBL" id="JF416958">
    <property type="protein sequence ID" value="AFF18434.1"/>
    <property type="molecule type" value="Genomic_RNA"/>
</dbReference>
<dbReference type="EMBL" id="JF416960">
    <property type="protein sequence ID" value="AFF18436.1"/>
    <property type="molecule type" value="Genomic_RNA"/>
</dbReference>
<dbReference type="EMBL" id="JF416959">
    <property type="protein sequence ID" value="AFF18435.1"/>
    <property type="molecule type" value="Genomic_RNA"/>
</dbReference>
<dbReference type="EMBL" id="HM055369">
    <property type="protein sequence ID" value="ADH95737.1"/>
    <property type="molecule type" value="Genomic_RNA"/>
</dbReference>
<dbReference type="PDB" id="7V4Q">
    <property type="method" value="X-ray"/>
    <property type="resolution" value="1.91 A"/>
    <property type="chains" value="A=1671-2112"/>
</dbReference>
<dbReference type="PDB" id="7V4R">
    <property type="method" value="X-ray"/>
    <property type="resolution" value="2.10 A"/>
    <property type="chains" value="A=1671-2112"/>
</dbReference>
<dbReference type="PDBsum" id="7V4Q"/>
<dbReference type="PDBsum" id="7V4R"/>
<dbReference type="SMR" id="D7RF80"/>
<dbReference type="Proteomes" id="UP000098523">
    <property type="component" value="Genome"/>
</dbReference>
<dbReference type="Proteomes" id="UP000125499">
    <property type="component" value="Genome"/>
</dbReference>
<dbReference type="Proteomes" id="UP000127351">
    <property type="component" value="Genome"/>
</dbReference>
<dbReference type="Proteomes" id="UP000130242">
    <property type="component" value="Genome"/>
</dbReference>
<dbReference type="Proteomes" id="UP000133616">
    <property type="component" value="Genome"/>
</dbReference>
<dbReference type="Proteomes" id="UP000158026">
    <property type="component" value="Genome"/>
</dbReference>
<dbReference type="GO" id="GO:0005576">
    <property type="term" value="C:extracellular region"/>
    <property type="evidence" value="ECO:0007669"/>
    <property type="project" value="UniProtKB-SubCell"/>
</dbReference>
<dbReference type="GO" id="GO:0044167">
    <property type="term" value="C:host cell endoplasmic reticulum membrane"/>
    <property type="evidence" value="ECO:0007669"/>
    <property type="project" value="UniProtKB-SubCell"/>
</dbReference>
<dbReference type="GO" id="GO:0042025">
    <property type="term" value="C:host cell nucleus"/>
    <property type="evidence" value="ECO:0007669"/>
    <property type="project" value="UniProtKB-SubCell"/>
</dbReference>
<dbReference type="GO" id="GO:0044220">
    <property type="term" value="C:host cell perinuclear region of cytoplasm"/>
    <property type="evidence" value="ECO:0007669"/>
    <property type="project" value="UniProtKB-SubCell"/>
</dbReference>
<dbReference type="GO" id="GO:0016020">
    <property type="term" value="C:membrane"/>
    <property type="evidence" value="ECO:0007669"/>
    <property type="project" value="UniProtKB-KW"/>
</dbReference>
<dbReference type="GO" id="GO:0019028">
    <property type="term" value="C:viral capsid"/>
    <property type="evidence" value="ECO:0007669"/>
    <property type="project" value="UniProtKB-KW"/>
</dbReference>
<dbReference type="GO" id="GO:0055036">
    <property type="term" value="C:virion membrane"/>
    <property type="evidence" value="ECO:0007669"/>
    <property type="project" value="UniProtKB-SubCell"/>
</dbReference>
<dbReference type="GO" id="GO:0005524">
    <property type="term" value="F:ATP binding"/>
    <property type="evidence" value="ECO:0007669"/>
    <property type="project" value="UniProtKB-KW"/>
</dbReference>
<dbReference type="GO" id="GO:0016887">
    <property type="term" value="F:ATP hydrolysis activity"/>
    <property type="evidence" value="ECO:0007669"/>
    <property type="project" value="RHEA"/>
</dbReference>
<dbReference type="GO" id="GO:0003725">
    <property type="term" value="F:double-stranded RNA binding"/>
    <property type="evidence" value="ECO:0007669"/>
    <property type="project" value="InterPro"/>
</dbReference>
<dbReference type="GO" id="GO:0046872">
    <property type="term" value="F:metal ion binding"/>
    <property type="evidence" value="ECO:0007669"/>
    <property type="project" value="UniProtKB-KW"/>
</dbReference>
<dbReference type="GO" id="GO:0004483">
    <property type="term" value="F:mRNA (nucleoside-2'-O-)-methyltransferase activity"/>
    <property type="evidence" value="ECO:0007669"/>
    <property type="project" value="UniProtKB-EC"/>
</dbReference>
<dbReference type="GO" id="GO:0004482">
    <property type="term" value="F:mRNA 5'-cap (guanine-N7-)-methyltransferase activity"/>
    <property type="evidence" value="ECO:0007669"/>
    <property type="project" value="UniProtKB-EC"/>
</dbReference>
<dbReference type="GO" id="GO:0046983">
    <property type="term" value="F:protein dimerization activity"/>
    <property type="evidence" value="ECO:0007669"/>
    <property type="project" value="InterPro"/>
</dbReference>
<dbReference type="GO" id="GO:0003724">
    <property type="term" value="F:RNA helicase activity"/>
    <property type="evidence" value="ECO:0007669"/>
    <property type="project" value="UniProtKB-EC"/>
</dbReference>
<dbReference type="GO" id="GO:0003968">
    <property type="term" value="F:RNA-directed RNA polymerase activity"/>
    <property type="evidence" value="ECO:0007669"/>
    <property type="project" value="UniProtKB-KW"/>
</dbReference>
<dbReference type="GO" id="GO:0004252">
    <property type="term" value="F:serine-type endopeptidase activity"/>
    <property type="evidence" value="ECO:0007669"/>
    <property type="project" value="InterPro"/>
</dbReference>
<dbReference type="GO" id="GO:0005198">
    <property type="term" value="F:structural molecule activity"/>
    <property type="evidence" value="ECO:0007669"/>
    <property type="project" value="InterPro"/>
</dbReference>
<dbReference type="GO" id="GO:0039654">
    <property type="term" value="P:fusion of virus membrane with host endosome membrane"/>
    <property type="evidence" value="ECO:0007669"/>
    <property type="project" value="UniProtKB-KW"/>
</dbReference>
<dbReference type="GO" id="GO:0006508">
    <property type="term" value="P:proteolysis"/>
    <property type="evidence" value="ECO:0007669"/>
    <property type="project" value="UniProtKB-KW"/>
</dbReference>
<dbReference type="GO" id="GO:0046718">
    <property type="term" value="P:symbiont entry into host cell"/>
    <property type="evidence" value="ECO:0007669"/>
    <property type="project" value="UniProtKB-KW"/>
</dbReference>
<dbReference type="GO" id="GO:0039520">
    <property type="term" value="P:symbiont-mediated activation of host autophagy"/>
    <property type="evidence" value="ECO:0007669"/>
    <property type="project" value="UniProtKB-KW"/>
</dbReference>
<dbReference type="GO" id="GO:0052170">
    <property type="term" value="P:symbiont-mediated suppression of host innate immune response"/>
    <property type="evidence" value="ECO:0007669"/>
    <property type="project" value="UniProtKB-KW"/>
</dbReference>
<dbReference type="GO" id="GO:0039563">
    <property type="term" value="P:symbiont-mediated suppression of host JAK-STAT cascade via inhibition of STAT1 activity"/>
    <property type="evidence" value="ECO:0007669"/>
    <property type="project" value="UniProtKB-KW"/>
</dbReference>
<dbReference type="GO" id="GO:0039564">
    <property type="term" value="P:symbiont-mediated suppression of host JAK-STAT cascade via inhibition of STAT2 activity"/>
    <property type="evidence" value="ECO:0007669"/>
    <property type="project" value="UniProtKB-KW"/>
</dbReference>
<dbReference type="GO" id="GO:0039502">
    <property type="term" value="P:symbiont-mediated suppression of host type I interferon-mediated signaling pathway"/>
    <property type="evidence" value="ECO:0007669"/>
    <property type="project" value="UniProtKB-KW"/>
</dbReference>
<dbReference type="GO" id="GO:0039694">
    <property type="term" value="P:viral RNA genome replication"/>
    <property type="evidence" value="ECO:0007669"/>
    <property type="project" value="InterPro"/>
</dbReference>
<dbReference type="GO" id="GO:0019062">
    <property type="term" value="P:virion attachment to host cell"/>
    <property type="evidence" value="ECO:0007669"/>
    <property type="project" value="UniProtKB-KW"/>
</dbReference>
<dbReference type="CDD" id="cd20761">
    <property type="entry name" value="capping_2-OMTase_Flaviviridae"/>
    <property type="match status" value="1"/>
</dbReference>
<dbReference type="CDD" id="cd17931">
    <property type="entry name" value="DEXHc_viral_Ns3"/>
    <property type="match status" value="1"/>
</dbReference>
<dbReference type="CDD" id="cd17038">
    <property type="entry name" value="Flavi_M"/>
    <property type="match status" value="1"/>
</dbReference>
<dbReference type="CDD" id="cd23204">
    <property type="entry name" value="Flavivirus_RdRp"/>
    <property type="match status" value="1"/>
</dbReference>
<dbReference type="FunFam" id="3.30.70.2840:FF:000004">
    <property type="entry name" value="Genome polyprotein"/>
    <property type="match status" value="1"/>
</dbReference>
<dbReference type="Gene3D" id="1.10.260.90">
    <property type="match status" value="1"/>
</dbReference>
<dbReference type="Gene3D" id="1.20.1280.260">
    <property type="match status" value="1"/>
</dbReference>
<dbReference type="Gene3D" id="2.40.10.120">
    <property type="match status" value="1"/>
</dbReference>
<dbReference type="Gene3D" id="2.60.40.350">
    <property type="match status" value="1"/>
</dbReference>
<dbReference type="Gene3D" id="1.10.8.970">
    <property type="entry name" value="Flavivirus envelope glycoprotein M-like"/>
    <property type="match status" value="1"/>
</dbReference>
<dbReference type="Gene3D" id="2.60.260.50">
    <property type="entry name" value="Flavivirus polyprotein propeptide domain"/>
    <property type="match status" value="1"/>
</dbReference>
<dbReference type="Gene3D" id="3.30.70.2840">
    <property type="entry name" value="Flavivirus RNA-directed RNA polymerase, thumb domain"/>
    <property type="match status" value="3"/>
</dbReference>
<dbReference type="Gene3D" id="3.40.50.300">
    <property type="entry name" value="P-loop containing nucleotide triphosphate hydrolases"/>
    <property type="match status" value="2"/>
</dbReference>
<dbReference type="Gene3D" id="2.60.98.10">
    <property type="entry name" value="Tick-borne Encephalitis virus Glycoprotein, domain 1"/>
    <property type="match status" value="1"/>
</dbReference>
<dbReference type="Gene3D" id="3.40.50.150">
    <property type="entry name" value="Vaccinia Virus protein VP39"/>
    <property type="match status" value="1"/>
</dbReference>
<dbReference type="Gene3D" id="3.30.67.10">
    <property type="entry name" value="Viral Envelope Glycoprotein, domain 2"/>
    <property type="match status" value="1"/>
</dbReference>
<dbReference type="Gene3D" id="3.30.387.10">
    <property type="entry name" value="Viral Envelope Glycoprotein, domain 3"/>
    <property type="match status" value="1"/>
</dbReference>
<dbReference type="InterPro" id="IPR043502">
    <property type="entry name" value="DNA/RNA_pol_sf"/>
</dbReference>
<dbReference type="InterPro" id="IPR000069">
    <property type="entry name" value="Env_glycoprot_M_flavivir"/>
</dbReference>
<dbReference type="InterPro" id="IPR038302">
    <property type="entry name" value="Env_glycoprot_M_sf_flavivir"/>
</dbReference>
<dbReference type="InterPro" id="IPR013755">
    <property type="entry name" value="Flav_gly_cen_dom_subdom1"/>
</dbReference>
<dbReference type="InterPro" id="IPR001122">
    <property type="entry name" value="Flavi_capsidC"/>
</dbReference>
<dbReference type="InterPro" id="IPR011492">
    <property type="entry name" value="Flavi_DEAD"/>
</dbReference>
<dbReference type="InterPro" id="IPR027287">
    <property type="entry name" value="Flavi_E_Ig-like"/>
</dbReference>
<dbReference type="InterPro" id="IPR026470">
    <property type="entry name" value="Flavi_E_Stem/Anchor_dom"/>
</dbReference>
<dbReference type="InterPro" id="IPR038345">
    <property type="entry name" value="Flavi_E_Stem/Anchor_dom_sf"/>
</dbReference>
<dbReference type="InterPro" id="IPR011998">
    <property type="entry name" value="Flavi_Glycoprot_E_cen/dimer"/>
</dbReference>
<dbReference type="InterPro" id="IPR001157">
    <property type="entry name" value="Flavi_NS1"/>
</dbReference>
<dbReference type="InterPro" id="IPR000752">
    <property type="entry name" value="Flavi_NS2A"/>
</dbReference>
<dbReference type="InterPro" id="IPR000487">
    <property type="entry name" value="Flavi_NS2B"/>
</dbReference>
<dbReference type="InterPro" id="IPR001850">
    <property type="entry name" value="Flavi_NS3_S7"/>
</dbReference>
<dbReference type="InterPro" id="IPR000404">
    <property type="entry name" value="Flavi_NS4A"/>
</dbReference>
<dbReference type="InterPro" id="IPR001528">
    <property type="entry name" value="Flavi_NS4B"/>
</dbReference>
<dbReference type="InterPro" id="IPR046811">
    <property type="entry name" value="Flavi_NS5_thumb"/>
</dbReference>
<dbReference type="InterPro" id="IPR002535">
    <property type="entry name" value="Flavi_propep"/>
</dbReference>
<dbReference type="InterPro" id="IPR038688">
    <property type="entry name" value="Flavi_propep_sf"/>
</dbReference>
<dbReference type="InterPro" id="IPR047530">
    <property type="entry name" value="Flavi_RdRp"/>
</dbReference>
<dbReference type="InterPro" id="IPR000208">
    <property type="entry name" value="Flavi_RdRp_fingers/palm"/>
</dbReference>
<dbReference type="InterPro" id="IPR000336">
    <property type="entry name" value="Flavivir/Alphavir_Ig-like_sf"/>
</dbReference>
<dbReference type="InterPro" id="IPR014412">
    <property type="entry name" value="Gen_Poly_FLV"/>
</dbReference>
<dbReference type="InterPro" id="IPR036253">
    <property type="entry name" value="Glycoprot_cen/dimer_sf"/>
</dbReference>
<dbReference type="InterPro" id="IPR038055">
    <property type="entry name" value="Glycoprot_E_dimer_dom"/>
</dbReference>
<dbReference type="InterPro" id="IPR013756">
    <property type="entry name" value="GlyE_cen_dom_subdom2"/>
</dbReference>
<dbReference type="InterPro" id="IPR014001">
    <property type="entry name" value="Helicase_ATP-bd"/>
</dbReference>
<dbReference type="InterPro" id="IPR001650">
    <property type="entry name" value="Helicase_C-like"/>
</dbReference>
<dbReference type="InterPro" id="IPR014756">
    <property type="entry name" value="Ig_E-set"/>
</dbReference>
<dbReference type="InterPro" id="IPR026490">
    <property type="entry name" value="mRNA_cap_0/1_MeTrfase"/>
</dbReference>
<dbReference type="InterPro" id="IPR049486">
    <property type="entry name" value="NS3-hel_C_flaviviridae"/>
</dbReference>
<dbReference type="InterPro" id="IPR027417">
    <property type="entry name" value="P-loop_NTPase"/>
</dbReference>
<dbReference type="InterPro" id="IPR009003">
    <property type="entry name" value="Peptidase_S1_PA"/>
</dbReference>
<dbReference type="InterPro" id="IPR007094">
    <property type="entry name" value="RNA-dir_pol_PSvirus"/>
</dbReference>
<dbReference type="InterPro" id="IPR002877">
    <property type="entry name" value="RNA_MeTrfase_FtsJ_dom"/>
</dbReference>
<dbReference type="InterPro" id="IPR029063">
    <property type="entry name" value="SAM-dependent_MTases_sf"/>
</dbReference>
<dbReference type="NCBIfam" id="TIGR04240">
    <property type="entry name" value="flavi_E_stem"/>
    <property type="match status" value="1"/>
</dbReference>
<dbReference type="Pfam" id="PF20907">
    <property type="entry name" value="Flav_NS3-hel_C"/>
    <property type="match status" value="1"/>
</dbReference>
<dbReference type="Pfam" id="PF01003">
    <property type="entry name" value="Flavi_capsid"/>
    <property type="match status" value="1"/>
</dbReference>
<dbReference type="Pfam" id="PF07652">
    <property type="entry name" value="Flavi_DEAD"/>
    <property type="match status" value="1"/>
</dbReference>
<dbReference type="Pfam" id="PF21659">
    <property type="entry name" value="Flavi_E_stem"/>
    <property type="match status" value="1"/>
</dbReference>
<dbReference type="Pfam" id="PF02832">
    <property type="entry name" value="Flavi_glycop_C"/>
    <property type="match status" value="1"/>
</dbReference>
<dbReference type="Pfam" id="PF00869">
    <property type="entry name" value="Flavi_glycoprot"/>
    <property type="match status" value="1"/>
</dbReference>
<dbReference type="Pfam" id="PF01004">
    <property type="entry name" value="Flavi_M"/>
    <property type="match status" value="1"/>
</dbReference>
<dbReference type="Pfam" id="PF00948">
    <property type="entry name" value="Flavi_NS1"/>
    <property type="match status" value="1"/>
</dbReference>
<dbReference type="Pfam" id="PF01005">
    <property type="entry name" value="Flavi_NS2A"/>
    <property type="match status" value="1"/>
</dbReference>
<dbReference type="Pfam" id="PF01002">
    <property type="entry name" value="Flavi_NS2B"/>
    <property type="match status" value="1"/>
</dbReference>
<dbReference type="Pfam" id="PF01350">
    <property type="entry name" value="Flavi_NS4A"/>
    <property type="match status" value="1"/>
</dbReference>
<dbReference type="Pfam" id="PF01349">
    <property type="entry name" value="Flavi_NS4B"/>
    <property type="match status" value="1"/>
</dbReference>
<dbReference type="Pfam" id="PF00972">
    <property type="entry name" value="Flavi_NS5"/>
    <property type="match status" value="1"/>
</dbReference>
<dbReference type="Pfam" id="PF20483">
    <property type="entry name" value="Flavi_NS5_thumb"/>
    <property type="match status" value="1"/>
</dbReference>
<dbReference type="Pfam" id="PF01570">
    <property type="entry name" value="Flavi_propep"/>
    <property type="match status" value="1"/>
</dbReference>
<dbReference type="Pfam" id="PF01728">
    <property type="entry name" value="FtsJ"/>
    <property type="match status" value="1"/>
</dbReference>
<dbReference type="Pfam" id="PF00949">
    <property type="entry name" value="Peptidase_S7"/>
    <property type="match status" value="1"/>
</dbReference>
<dbReference type="PIRSF" id="PIRSF003817">
    <property type="entry name" value="Gen_Poly_FLV"/>
    <property type="match status" value="1"/>
</dbReference>
<dbReference type="SMART" id="SM00487">
    <property type="entry name" value="DEXDc"/>
    <property type="match status" value="1"/>
</dbReference>
<dbReference type="SMART" id="SM00490">
    <property type="entry name" value="HELICc"/>
    <property type="match status" value="1"/>
</dbReference>
<dbReference type="SUPFAM" id="SSF56672">
    <property type="entry name" value="DNA/RNA polymerases"/>
    <property type="match status" value="1"/>
</dbReference>
<dbReference type="SUPFAM" id="SSF81296">
    <property type="entry name" value="E set domains"/>
    <property type="match status" value="1"/>
</dbReference>
<dbReference type="SUPFAM" id="SSF52540">
    <property type="entry name" value="P-loop containing nucleoside triphosphate hydrolases"/>
    <property type="match status" value="2"/>
</dbReference>
<dbReference type="SUPFAM" id="SSF53335">
    <property type="entry name" value="S-adenosyl-L-methionine-dependent methyltransferases"/>
    <property type="match status" value="1"/>
</dbReference>
<dbReference type="SUPFAM" id="SSF50494">
    <property type="entry name" value="Trypsin-like serine proteases"/>
    <property type="match status" value="1"/>
</dbReference>
<dbReference type="SUPFAM" id="SSF56983">
    <property type="entry name" value="Viral glycoprotein, central and dimerisation domains"/>
    <property type="match status" value="1"/>
</dbReference>
<dbReference type="PROSITE" id="PS51527">
    <property type="entry name" value="FLAVIVIRUS_NS2B"/>
    <property type="match status" value="1"/>
</dbReference>
<dbReference type="PROSITE" id="PS51528">
    <property type="entry name" value="FLAVIVIRUS_NS3PRO"/>
    <property type="match status" value="1"/>
</dbReference>
<dbReference type="PROSITE" id="PS51192">
    <property type="entry name" value="HELICASE_ATP_BIND_1"/>
    <property type="match status" value="1"/>
</dbReference>
<dbReference type="PROSITE" id="PS51194">
    <property type="entry name" value="HELICASE_CTER"/>
    <property type="match status" value="1"/>
</dbReference>
<dbReference type="PROSITE" id="PS50507">
    <property type="entry name" value="RDRP_SSRNA_POS"/>
    <property type="match status" value="1"/>
</dbReference>
<dbReference type="PROSITE" id="PS51591">
    <property type="entry name" value="RNA_CAP01_NS5_MT"/>
    <property type="match status" value="1"/>
</dbReference>